<accession>A2BSA4</accession>
<sequence length="425" mass="48156">MLDQKLIRENPTSVEENLSLRGKVYKISHIHELTVKKKEIDIEISSLQSESKKLSKLISQVIGKSQDNNSQELNDLKKKGNEYRIKISELEEKQRILNKKVDDEIYNLPNFPSKDAPIGKDESENLQIKTWGDPLIKENIKSHWEIGESLNIFDSIKSTKISKSRFITLIGNGARLERALINFMLDMHTKNGYLELMPPALVNSESLTGSGQLPKFSNESFKCSNDDLWLSPTAEVPLTALHRNELIDPKHLPLKYVAYSPCFRREAGSYGRDTKGLIRLHQFNKVELYWFCDPSKSLEAHKEITTDAESILKKLNLPYRLVDICTGDLGFSSSRTFDLEVWLPSSKCYREISSCSNCLDFQARRSSIRSKIDKKNTYIHTLNGSGLAIGRTMAAILENGQQTDGSVKIPDALVPYFGSNLLKTA</sequence>
<protein>
    <recommendedName>
        <fullName evidence="1">Serine--tRNA ligase</fullName>
        <ecNumber evidence="1">6.1.1.11</ecNumber>
    </recommendedName>
    <alternativeName>
        <fullName evidence="1">Seryl-tRNA synthetase</fullName>
        <shortName evidence="1">SerRS</shortName>
    </alternativeName>
    <alternativeName>
        <fullName evidence="1">Seryl-tRNA(Ser/Sec) synthetase</fullName>
    </alternativeName>
</protein>
<name>SYS_PROMS</name>
<gene>
    <name evidence="1" type="primary">serS</name>
    <name type="ordered locus">A9601_13811</name>
</gene>
<dbReference type="EC" id="6.1.1.11" evidence="1"/>
<dbReference type="EMBL" id="CP000551">
    <property type="protein sequence ID" value="ABM70665.1"/>
    <property type="molecule type" value="Genomic_DNA"/>
</dbReference>
<dbReference type="RefSeq" id="WP_011818802.1">
    <property type="nucleotide sequence ID" value="NC_008816.1"/>
</dbReference>
<dbReference type="SMR" id="A2BSA4"/>
<dbReference type="STRING" id="146891.A9601_13811"/>
<dbReference type="KEGG" id="pmb:A9601_13811"/>
<dbReference type="eggNOG" id="COG0172">
    <property type="taxonomic scope" value="Bacteria"/>
</dbReference>
<dbReference type="HOGENOM" id="CLU_023797_1_1_3"/>
<dbReference type="OrthoDB" id="9804647at2"/>
<dbReference type="UniPathway" id="UPA00906">
    <property type="reaction ID" value="UER00895"/>
</dbReference>
<dbReference type="Proteomes" id="UP000002590">
    <property type="component" value="Chromosome"/>
</dbReference>
<dbReference type="GO" id="GO:0005737">
    <property type="term" value="C:cytoplasm"/>
    <property type="evidence" value="ECO:0007669"/>
    <property type="project" value="UniProtKB-SubCell"/>
</dbReference>
<dbReference type="GO" id="GO:0005524">
    <property type="term" value="F:ATP binding"/>
    <property type="evidence" value="ECO:0007669"/>
    <property type="project" value="UniProtKB-UniRule"/>
</dbReference>
<dbReference type="GO" id="GO:0004828">
    <property type="term" value="F:serine-tRNA ligase activity"/>
    <property type="evidence" value="ECO:0007669"/>
    <property type="project" value="UniProtKB-UniRule"/>
</dbReference>
<dbReference type="GO" id="GO:0016260">
    <property type="term" value="P:selenocysteine biosynthetic process"/>
    <property type="evidence" value="ECO:0007669"/>
    <property type="project" value="UniProtKB-UniRule"/>
</dbReference>
<dbReference type="GO" id="GO:0006434">
    <property type="term" value="P:seryl-tRNA aminoacylation"/>
    <property type="evidence" value="ECO:0007669"/>
    <property type="project" value="UniProtKB-UniRule"/>
</dbReference>
<dbReference type="CDD" id="cd00770">
    <property type="entry name" value="SerRS_core"/>
    <property type="match status" value="1"/>
</dbReference>
<dbReference type="Gene3D" id="3.30.930.10">
    <property type="entry name" value="Bira Bifunctional Protein, Domain 2"/>
    <property type="match status" value="1"/>
</dbReference>
<dbReference type="Gene3D" id="1.10.287.40">
    <property type="entry name" value="Serine-tRNA synthetase, tRNA binding domain"/>
    <property type="match status" value="1"/>
</dbReference>
<dbReference type="HAMAP" id="MF_00176">
    <property type="entry name" value="Ser_tRNA_synth_type1"/>
    <property type="match status" value="1"/>
</dbReference>
<dbReference type="InterPro" id="IPR002314">
    <property type="entry name" value="aa-tRNA-synt_IIb"/>
</dbReference>
<dbReference type="InterPro" id="IPR006195">
    <property type="entry name" value="aa-tRNA-synth_II"/>
</dbReference>
<dbReference type="InterPro" id="IPR045864">
    <property type="entry name" value="aa-tRNA-synth_II/BPL/LPL"/>
</dbReference>
<dbReference type="InterPro" id="IPR002317">
    <property type="entry name" value="Ser-tRNA-ligase_type_1"/>
</dbReference>
<dbReference type="InterPro" id="IPR015866">
    <property type="entry name" value="Ser-tRNA-synth_1_N"/>
</dbReference>
<dbReference type="InterPro" id="IPR042103">
    <property type="entry name" value="SerRS_1_N_sf"/>
</dbReference>
<dbReference type="InterPro" id="IPR033729">
    <property type="entry name" value="SerRS_core"/>
</dbReference>
<dbReference type="InterPro" id="IPR010978">
    <property type="entry name" value="tRNA-bd_arm"/>
</dbReference>
<dbReference type="NCBIfam" id="TIGR00414">
    <property type="entry name" value="serS"/>
    <property type="match status" value="1"/>
</dbReference>
<dbReference type="PANTHER" id="PTHR43697:SF1">
    <property type="entry name" value="SERINE--TRNA LIGASE"/>
    <property type="match status" value="1"/>
</dbReference>
<dbReference type="PANTHER" id="PTHR43697">
    <property type="entry name" value="SERYL-TRNA SYNTHETASE"/>
    <property type="match status" value="1"/>
</dbReference>
<dbReference type="Pfam" id="PF02403">
    <property type="entry name" value="Seryl_tRNA_N"/>
    <property type="match status" value="1"/>
</dbReference>
<dbReference type="Pfam" id="PF00587">
    <property type="entry name" value="tRNA-synt_2b"/>
    <property type="match status" value="1"/>
</dbReference>
<dbReference type="PIRSF" id="PIRSF001529">
    <property type="entry name" value="Ser-tRNA-synth_IIa"/>
    <property type="match status" value="1"/>
</dbReference>
<dbReference type="PRINTS" id="PR00981">
    <property type="entry name" value="TRNASYNTHSER"/>
</dbReference>
<dbReference type="SUPFAM" id="SSF55681">
    <property type="entry name" value="Class II aaRS and biotin synthetases"/>
    <property type="match status" value="1"/>
</dbReference>
<dbReference type="SUPFAM" id="SSF46589">
    <property type="entry name" value="tRNA-binding arm"/>
    <property type="match status" value="1"/>
</dbReference>
<dbReference type="PROSITE" id="PS50862">
    <property type="entry name" value="AA_TRNA_LIGASE_II"/>
    <property type="match status" value="1"/>
</dbReference>
<feature type="chain" id="PRO_1000019768" description="Serine--tRNA ligase">
    <location>
        <begin position="1"/>
        <end position="425"/>
    </location>
</feature>
<feature type="binding site" evidence="1">
    <location>
        <begin position="233"/>
        <end position="235"/>
    </location>
    <ligand>
        <name>L-serine</name>
        <dbReference type="ChEBI" id="CHEBI:33384"/>
    </ligand>
</feature>
<feature type="binding site" evidence="1">
    <location>
        <begin position="264"/>
        <end position="266"/>
    </location>
    <ligand>
        <name>ATP</name>
        <dbReference type="ChEBI" id="CHEBI:30616"/>
    </ligand>
</feature>
<feature type="binding site" evidence="1">
    <location>
        <position position="287"/>
    </location>
    <ligand>
        <name>L-serine</name>
        <dbReference type="ChEBI" id="CHEBI:33384"/>
    </ligand>
</feature>
<feature type="binding site" evidence="1">
    <location>
        <begin position="351"/>
        <end position="354"/>
    </location>
    <ligand>
        <name>ATP</name>
        <dbReference type="ChEBI" id="CHEBI:30616"/>
    </ligand>
</feature>
<feature type="binding site" evidence="1">
    <location>
        <position position="385"/>
    </location>
    <ligand>
        <name>L-serine</name>
        <dbReference type="ChEBI" id="CHEBI:33384"/>
    </ligand>
</feature>
<evidence type="ECO:0000255" key="1">
    <source>
        <dbReference type="HAMAP-Rule" id="MF_00176"/>
    </source>
</evidence>
<reference key="1">
    <citation type="journal article" date="2007" name="PLoS Genet.">
        <title>Patterns and implications of gene gain and loss in the evolution of Prochlorococcus.</title>
        <authorList>
            <person name="Kettler G.C."/>
            <person name="Martiny A.C."/>
            <person name="Huang K."/>
            <person name="Zucker J."/>
            <person name="Coleman M.L."/>
            <person name="Rodrigue S."/>
            <person name="Chen F."/>
            <person name="Lapidus A."/>
            <person name="Ferriera S."/>
            <person name="Johnson J."/>
            <person name="Steglich C."/>
            <person name="Church G.M."/>
            <person name="Richardson P."/>
            <person name="Chisholm S.W."/>
        </authorList>
    </citation>
    <scope>NUCLEOTIDE SEQUENCE [LARGE SCALE GENOMIC DNA]</scope>
    <source>
        <strain>AS9601</strain>
    </source>
</reference>
<comment type="function">
    <text evidence="1">Catalyzes the attachment of serine to tRNA(Ser). Is also able to aminoacylate tRNA(Sec) with serine, to form the misacylated tRNA L-seryl-tRNA(Sec), which will be further converted into selenocysteinyl-tRNA(Sec).</text>
</comment>
<comment type="catalytic activity">
    <reaction evidence="1">
        <text>tRNA(Ser) + L-serine + ATP = L-seryl-tRNA(Ser) + AMP + diphosphate + H(+)</text>
        <dbReference type="Rhea" id="RHEA:12292"/>
        <dbReference type="Rhea" id="RHEA-COMP:9669"/>
        <dbReference type="Rhea" id="RHEA-COMP:9703"/>
        <dbReference type="ChEBI" id="CHEBI:15378"/>
        <dbReference type="ChEBI" id="CHEBI:30616"/>
        <dbReference type="ChEBI" id="CHEBI:33019"/>
        <dbReference type="ChEBI" id="CHEBI:33384"/>
        <dbReference type="ChEBI" id="CHEBI:78442"/>
        <dbReference type="ChEBI" id="CHEBI:78533"/>
        <dbReference type="ChEBI" id="CHEBI:456215"/>
        <dbReference type="EC" id="6.1.1.11"/>
    </reaction>
</comment>
<comment type="catalytic activity">
    <reaction evidence="1">
        <text>tRNA(Sec) + L-serine + ATP = L-seryl-tRNA(Sec) + AMP + diphosphate + H(+)</text>
        <dbReference type="Rhea" id="RHEA:42580"/>
        <dbReference type="Rhea" id="RHEA-COMP:9742"/>
        <dbReference type="Rhea" id="RHEA-COMP:10128"/>
        <dbReference type="ChEBI" id="CHEBI:15378"/>
        <dbReference type="ChEBI" id="CHEBI:30616"/>
        <dbReference type="ChEBI" id="CHEBI:33019"/>
        <dbReference type="ChEBI" id="CHEBI:33384"/>
        <dbReference type="ChEBI" id="CHEBI:78442"/>
        <dbReference type="ChEBI" id="CHEBI:78533"/>
        <dbReference type="ChEBI" id="CHEBI:456215"/>
        <dbReference type="EC" id="6.1.1.11"/>
    </reaction>
</comment>
<comment type="pathway">
    <text evidence="1">Aminoacyl-tRNA biosynthesis; selenocysteinyl-tRNA(Sec) biosynthesis; L-seryl-tRNA(Sec) from L-serine and tRNA(Sec): step 1/1.</text>
</comment>
<comment type="subunit">
    <text evidence="1">Homodimer. The tRNA molecule binds across the dimer.</text>
</comment>
<comment type="subcellular location">
    <subcellularLocation>
        <location evidence="1">Cytoplasm</location>
    </subcellularLocation>
</comment>
<comment type="domain">
    <text evidence="1">Consists of two distinct domains, a catalytic core and a N-terminal extension that is involved in tRNA binding.</text>
</comment>
<comment type="similarity">
    <text evidence="1">Belongs to the class-II aminoacyl-tRNA synthetase family. Type-1 seryl-tRNA synthetase subfamily.</text>
</comment>
<keyword id="KW-0030">Aminoacyl-tRNA synthetase</keyword>
<keyword id="KW-0067">ATP-binding</keyword>
<keyword id="KW-0963">Cytoplasm</keyword>
<keyword id="KW-0436">Ligase</keyword>
<keyword id="KW-0547">Nucleotide-binding</keyword>
<keyword id="KW-0648">Protein biosynthesis</keyword>
<proteinExistence type="inferred from homology"/>
<organism>
    <name type="scientific">Prochlorococcus marinus (strain AS9601)</name>
    <dbReference type="NCBI Taxonomy" id="146891"/>
    <lineage>
        <taxon>Bacteria</taxon>
        <taxon>Bacillati</taxon>
        <taxon>Cyanobacteriota</taxon>
        <taxon>Cyanophyceae</taxon>
        <taxon>Synechococcales</taxon>
        <taxon>Prochlorococcaceae</taxon>
        <taxon>Prochlorococcus</taxon>
    </lineage>
</organism>